<keyword id="KW-0067">ATP-binding</keyword>
<keyword id="KW-0436">Ligase</keyword>
<keyword id="KW-0479">Metal-binding</keyword>
<keyword id="KW-0547">Nucleotide-binding</keyword>
<keyword id="KW-0671">Queuosine biosynthesis</keyword>
<keyword id="KW-0862">Zinc</keyword>
<organism>
    <name type="scientific">Sulfurovum sp. (strain NBC37-1)</name>
    <dbReference type="NCBI Taxonomy" id="387093"/>
    <lineage>
        <taxon>Bacteria</taxon>
        <taxon>Pseudomonadati</taxon>
        <taxon>Campylobacterota</taxon>
        <taxon>Epsilonproteobacteria</taxon>
        <taxon>Campylobacterales</taxon>
        <taxon>Sulfurovaceae</taxon>
        <taxon>Sulfurovum</taxon>
    </lineage>
</organism>
<proteinExistence type="inferred from homology"/>
<comment type="function">
    <text evidence="1">Catalyzes the ATP-dependent conversion of 7-carboxy-7-deazaguanine (CDG) to 7-cyano-7-deazaguanine (preQ(0)).</text>
</comment>
<comment type="catalytic activity">
    <reaction evidence="1">
        <text>7-carboxy-7-deazaguanine + NH4(+) + ATP = 7-cyano-7-deazaguanine + ADP + phosphate + H2O + H(+)</text>
        <dbReference type="Rhea" id="RHEA:27982"/>
        <dbReference type="ChEBI" id="CHEBI:15377"/>
        <dbReference type="ChEBI" id="CHEBI:15378"/>
        <dbReference type="ChEBI" id="CHEBI:28938"/>
        <dbReference type="ChEBI" id="CHEBI:30616"/>
        <dbReference type="ChEBI" id="CHEBI:43474"/>
        <dbReference type="ChEBI" id="CHEBI:45075"/>
        <dbReference type="ChEBI" id="CHEBI:61036"/>
        <dbReference type="ChEBI" id="CHEBI:456216"/>
        <dbReference type="EC" id="6.3.4.20"/>
    </reaction>
</comment>
<comment type="cofactor">
    <cofactor evidence="1">
        <name>Zn(2+)</name>
        <dbReference type="ChEBI" id="CHEBI:29105"/>
    </cofactor>
    <text evidence="1">Binds 1 zinc ion per subunit.</text>
</comment>
<comment type="pathway">
    <text evidence="1">Purine metabolism; 7-cyano-7-deazaguanine biosynthesis.</text>
</comment>
<comment type="similarity">
    <text evidence="1">Belongs to the QueC family.</text>
</comment>
<sequence>MGKKAVCIISGGMDSALSAKIAQEEGYEIIALHFNYGQRTRNKELECFRKITQELNASESYEIDLDFFEQIGASALTDKSIDVPIGGLEEGVPVTYVPFRNGIFLSIAAAIAEKHGAEALFIGVVEEDSSGYPDCRESYIEQMQKAINLGTKDETNIEIKMPLVSLRKSQIVQKAIELGVPLEDTWSCYQAEDAACGVCDSCRLRLRGFEVAGVKDPIAYRK</sequence>
<name>QUEC_SULNB</name>
<gene>
    <name evidence="1" type="primary">queC</name>
    <name type="ordered locus">SUN_1264</name>
</gene>
<protein>
    <recommendedName>
        <fullName evidence="1">7-cyano-7-deazaguanine synthase</fullName>
        <ecNumber evidence="1">6.3.4.20</ecNumber>
    </recommendedName>
    <alternativeName>
        <fullName evidence="1">7-cyano-7-carbaguanine synthase</fullName>
    </alternativeName>
    <alternativeName>
        <fullName evidence="1">PreQ(0) synthase</fullName>
    </alternativeName>
    <alternativeName>
        <fullName evidence="1">Queuosine biosynthesis protein QueC</fullName>
    </alternativeName>
</protein>
<reference key="1">
    <citation type="journal article" date="2007" name="Proc. Natl. Acad. Sci. U.S.A.">
        <title>Deep-sea vent epsilon-proteobacterial genomes provide insights into emergence of pathogens.</title>
        <authorList>
            <person name="Nakagawa S."/>
            <person name="Takaki Y."/>
            <person name="Shimamura S."/>
            <person name="Reysenbach A.-L."/>
            <person name="Takai K."/>
            <person name="Horikoshi K."/>
        </authorList>
    </citation>
    <scope>NUCLEOTIDE SEQUENCE [LARGE SCALE GENOMIC DNA]</scope>
    <source>
        <strain>NBC37-1</strain>
    </source>
</reference>
<evidence type="ECO:0000255" key="1">
    <source>
        <dbReference type="HAMAP-Rule" id="MF_01633"/>
    </source>
</evidence>
<feature type="chain" id="PRO_1000069803" description="7-cyano-7-deazaguanine synthase">
    <location>
        <begin position="1"/>
        <end position="222"/>
    </location>
</feature>
<feature type="binding site" evidence="1">
    <location>
        <begin position="9"/>
        <end position="19"/>
    </location>
    <ligand>
        <name>ATP</name>
        <dbReference type="ChEBI" id="CHEBI:30616"/>
    </ligand>
</feature>
<feature type="binding site" evidence="1">
    <location>
        <position position="188"/>
    </location>
    <ligand>
        <name>Zn(2+)</name>
        <dbReference type="ChEBI" id="CHEBI:29105"/>
    </ligand>
</feature>
<feature type="binding site" evidence="1">
    <location>
        <position position="196"/>
    </location>
    <ligand>
        <name>Zn(2+)</name>
        <dbReference type="ChEBI" id="CHEBI:29105"/>
    </ligand>
</feature>
<feature type="binding site" evidence="1">
    <location>
        <position position="199"/>
    </location>
    <ligand>
        <name>Zn(2+)</name>
        <dbReference type="ChEBI" id="CHEBI:29105"/>
    </ligand>
</feature>
<feature type="binding site" evidence="1">
    <location>
        <position position="202"/>
    </location>
    <ligand>
        <name>Zn(2+)</name>
        <dbReference type="ChEBI" id="CHEBI:29105"/>
    </ligand>
</feature>
<accession>A6Q9Q9</accession>
<dbReference type="EC" id="6.3.4.20" evidence="1"/>
<dbReference type="EMBL" id="AP009179">
    <property type="protein sequence ID" value="BAF72218.1"/>
    <property type="molecule type" value="Genomic_DNA"/>
</dbReference>
<dbReference type="RefSeq" id="WP_011980951.1">
    <property type="nucleotide sequence ID" value="NC_009663.1"/>
</dbReference>
<dbReference type="SMR" id="A6Q9Q9"/>
<dbReference type="STRING" id="387093.SUN_1264"/>
<dbReference type="KEGG" id="sun:SUN_1264"/>
<dbReference type="eggNOG" id="COG0603">
    <property type="taxonomic scope" value="Bacteria"/>
</dbReference>
<dbReference type="HOGENOM" id="CLU_081854_1_0_7"/>
<dbReference type="OrthoDB" id="9789567at2"/>
<dbReference type="UniPathway" id="UPA00391"/>
<dbReference type="Proteomes" id="UP000006378">
    <property type="component" value="Chromosome"/>
</dbReference>
<dbReference type="GO" id="GO:0005524">
    <property type="term" value="F:ATP binding"/>
    <property type="evidence" value="ECO:0007669"/>
    <property type="project" value="UniProtKB-UniRule"/>
</dbReference>
<dbReference type="GO" id="GO:0016879">
    <property type="term" value="F:ligase activity, forming carbon-nitrogen bonds"/>
    <property type="evidence" value="ECO:0007669"/>
    <property type="project" value="UniProtKB-UniRule"/>
</dbReference>
<dbReference type="GO" id="GO:0008270">
    <property type="term" value="F:zinc ion binding"/>
    <property type="evidence" value="ECO:0007669"/>
    <property type="project" value="UniProtKB-UniRule"/>
</dbReference>
<dbReference type="GO" id="GO:0008616">
    <property type="term" value="P:queuosine biosynthetic process"/>
    <property type="evidence" value="ECO:0007669"/>
    <property type="project" value="UniProtKB-UniRule"/>
</dbReference>
<dbReference type="CDD" id="cd01995">
    <property type="entry name" value="QueC-like"/>
    <property type="match status" value="1"/>
</dbReference>
<dbReference type="Gene3D" id="3.40.50.620">
    <property type="entry name" value="HUPs"/>
    <property type="match status" value="1"/>
</dbReference>
<dbReference type="HAMAP" id="MF_01633">
    <property type="entry name" value="QueC"/>
    <property type="match status" value="1"/>
</dbReference>
<dbReference type="InterPro" id="IPR018317">
    <property type="entry name" value="QueC"/>
</dbReference>
<dbReference type="InterPro" id="IPR014729">
    <property type="entry name" value="Rossmann-like_a/b/a_fold"/>
</dbReference>
<dbReference type="NCBIfam" id="TIGR00364">
    <property type="entry name" value="7-cyano-7-deazaguanine synthase QueC"/>
    <property type="match status" value="1"/>
</dbReference>
<dbReference type="PANTHER" id="PTHR42914">
    <property type="entry name" value="7-CYANO-7-DEAZAGUANINE SYNTHASE"/>
    <property type="match status" value="1"/>
</dbReference>
<dbReference type="PANTHER" id="PTHR42914:SF1">
    <property type="entry name" value="7-CYANO-7-DEAZAGUANINE SYNTHASE"/>
    <property type="match status" value="1"/>
</dbReference>
<dbReference type="Pfam" id="PF06508">
    <property type="entry name" value="QueC"/>
    <property type="match status" value="1"/>
</dbReference>
<dbReference type="PIRSF" id="PIRSF006293">
    <property type="entry name" value="ExsB"/>
    <property type="match status" value="1"/>
</dbReference>
<dbReference type="SUPFAM" id="SSF52402">
    <property type="entry name" value="Adenine nucleotide alpha hydrolases-like"/>
    <property type="match status" value="1"/>
</dbReference>